<sequence length="218" mass="25048">MNCRSEILEVSVEGRQVEEAMLAVLHTILLHRSTGKFHYKKEGTYSIGTVGTQDIDCDFIEFTYVRVSSEELDRALHKAVSEFKDALRNSGSDGIGQVSLEFYQKKKSRWPFSDECIPWEVWTIKVNVVSLANEQERQICREKVGEKLGEKIINIVEVMNRHEYLPKMPTQSEVDNVFDTSLKDVQPYLYKISYQITDSLGTSVTTTMRRLIKDTLAL</sequence>
<feature type="chain" id="PRO_0000294326" description="Autophagy-related protein 101">
    <location>
        <begin position="1"/>
        <end position="218"/>
    </location>
</feature>
<name>ATGA1_XENLA</name>
<protein>
    <recommendedName>
        <fullName>Autophagy-related protein 101</fullName>
    </recommendedName>
</protein>
<proteinExistence type="evidence at transcript level"/>
<comment type="function">
    <text evidence="1">Autophagy factor required for autophagosome formation.</text>
</comment>
<comment type="subcellular location">
    <subcellularLocation>
        <location evidence="1">Cytoplasm</location>
    </subcellularLocation>
    <subcellularLocation>
        <location evidence="1">Preautophagosomal structure</location>
    </subcellularLocation>
    <text evidence="1">Under starvation conditions, it is localized to puncate structures primarily representing the isolation membrane; the isolation membrane sequesters a portion of the cytoplasm resulting in autophagosome formation.</text>
</comment>
<comment type="similarity">
    <text evidence="2">Belongs to the ATG101 family.</text>
</comment>
<reference key="1">
    <citation type="submission" date="2004-07" db="EMBL/GenBank/DDBJ databases">
        <authorList>
            <consortium name="NIH - Xenopus Gene Collection (XGC) project"/>
        </authorList>
    </citation>
    <scope>NUCLEOTIDE SEQUENCE [LARGE SCALE MRNA]</scope>
    <source>
        <tissue>Embryo</tissue>
    </source>
</reference>
<accession>Q6DE58</accession>
<gene>
    <name type="primary">atg101</name>
</gene>
<keyword id="KW-0072">Autophagy</keyword>
<keyword id="KW-0963">Cytoplasm</keyword>
<keyword id="KW-1185">Reference proteome</keyword>
<dbReference type="EMBL" id="BC077284">
    <property type="protein sequence ID" value="AAH77284.1"/>
    <property type="molecule type" value="mRNA"/>
</dbReference>
<dbReference type="RefSeq" id="NP_001086669.1">
    <property type="nucleotide sequence ID" value="NM_001093200.1"/>
</dbReference>
<dbReference type="SMR" id="Q6DE58"/>
<dbReference type="DNASU" id="446504"/>
<dbReference type="GeneID" id="446504"/>
<dbReference type="KEGG" id="xla:446504"/>
<dbReference type="AGR" id="Xenbase:XB-GENE-5873876"/>
<dbReference type="CTD" id="446504"/>
<dbReference type="Xenbase" id="XB-GENE-5873876">
    <property type="gene designation" value="atg101.L"/>
</dbReference>
<dbReference type="OMA" id="TMNCRSE"/>
<dbReference type="OrthoDB" id="10259639at2759"/>
<dbReference type="Proteomes" id="UP000186698">
    <property type="component" value="Chromosome 2L"/>
</dbReference>
<dbReference type="Bgee" id="446504">
    <property type="expression patterns" value="Expressed in muscle tissue and 19 other cell types or tissues"/>
</dbReference>
<dbReference type="GO" id="GO:1990316">
    <property type="term" value="C:Atg1/ULK1 kinase complex"/>
    <property type="evidence" value="ECO:0000318"/>
    <property type="project" value="GO_Central"/>
</dbReference>
<dbReference type="GO" id="GO:0000407">
    <property type="term" value="C:phagophore assembly site"/>
    <property type="evidence" value="ECO:0000318"/>
    <property type="project" value="GO_Central"/>
</dbReference>
<dbReference type="GO" id="GO:0019901">
    <property type="term" value="F:protein kinase binding"/>
    <property type="evidence" value="ECO:0000318"/>
    <property type="project" value="GO_Central"/>
</dbReference>
<dbReference type="GO" id="GO:0000045">
    <property type="term" value="P:autophagosome assembly"/>
    <property type="evidence" value="ECO:0000318"/>
    <property type="project" value="GO_Central"/>
</dbReference>
<dbReference type="InterPro" id="IPR012445">
    <property type="entry name" value="ATG101"/>
</dbReference>
<dbReference type="PANTHER" id="PTHR13292">
    <property type="entry name" value="AUTOPHAGY-RELATED PROTEIN 101"/>
    <property type="match status" value="1"/>
</dbReference>
<dbReference type="PANTHER" id="PTHR13292:SF0">
    <property type="entry name" value="AUTOPHAGY-RELATED PROTEIN 101"/>
    <property type="match status" value="1"/>
</dbReference>
<dbReference type="Pfam" id="PF07855">
    <property type="entry name" value="ATG101"/>
    <property type="match status" value="1"/>
</dbReference>
<organism>
    <name type="scientific">Xenopus laevis</name>
    <name type="common">African clawed frog</name>
    <dbReference type="NCBI Taxonomy" id="8355"/>
    <lineage>
        <taxon>Eukaryota</taxon>
        <taxon>Metazoa</taxon>
        <taxon>Chordata</taxon>
        <taxon>Craniata</taxon>
        <taxon>Vertebrata</taxon>
        <taxon>Euteleostomi</taxon>
        <taxon>Amphibia</taxon>
        <taxon>Batrachia</taxon>
        <taxon>Anura</taxon>
        <taxon>Pipoidea</taxon>
        <taxon>Pipidae</taxon>
        <taxon>Xenopodinae</taxon>
        <taxon>Xenopus</taxon>
        <taxon>Xenopus</taxon>
    </lineage>
</organism>
<evidence type="ECO:0000250" key="1">
    <source>
        <dbReference type="UniProtKB" id="Q9BSB4"/>
    </source>
</evidence>
<evidence type="ECO:0000305" key="2"/>